<dbReference type="EMBL" id="AF388035">
    <property type="protein sequence ID" value="AAK71997.1"/>
    <property type="molecule type" value="mRNA"/>
</dbReference>
<dbReference type="RefSeq" id="NP_001079158.1">
    <property type="nucleotide sequence ID" value="NM_001085689.1"/>
</dbReference>
<dbReference type="SMR" id="Q90Z04"/>
<dbReference type="GlyCosmos" id="Q90Z04">
    <property type="glycosylation" value="6 sites, No reported glycans"/>
</dbReference>
<dbReference type="GeneID" id="373711"/>
<dbReference type="KEGG" id="xla:373711"/>
<dbReference type="AGR" id="Xenbase:XB-GENE-922842"/>
<dbReference type="CTD" id="373711"/>
<dbReference type="Xenbase" id="XB-GENE-922842">
    <property type="gene designation" value="cdon.L"/>
</dbReference>
<dbReference type="OrthoDB" id="9998697at2759"/>
<dbReference type="Proteomes" id="UP000186698">
    <property type="component" value="Chromosome 7L"/>
</dbReference>
<dbReference type="Bgee" id="373711">
    <property type="expression patterns" value="Expressed in internal ear and 15 other cell types or tissues"/>
</dbReference>
<dbReference type="GO" id="GO:0005886">
    <property type="term" value="C:plasma membrane"/>
    <property type="evidence" value="ECO:0007669"/>
    <property type="project" value="UniProtKB-SubCell"/>
</dbReference>
<dbReference type="GO" id="GO:0098609">
    <property type="term" value="P:cell-cell adhesion"/>
    <property type="evidence" value="ECO:0000318"/>
    <property type="project" value="GO_Central"/>
</dbReference>
<dbReference type="GO" id="GO:0007399">
    <property type="term" value="P:nervous system development"/>
    <property type="evidence" value="ECO:0000318"/>
    <property type="project" value="GO_Central"/>
</dbReference>
<dbReference type="CDD" id="cd00063">
    <property type="entry name" value="FN3"/>
    <property type="match status" value="3"/>
</dbReference>
<dbReference type="CDD" id="cd00096">
    <property type="entry name" value="Ig"/>
    <property type="match status" value="2"/>
</dbReference>
<dbReference type="FunFam" id="2.60.40.10:FF:000273">
    <property type="entry name" value="contactin-3 isoform X1"/>
    <property type="match status" value="1"/>
</dbReference>
<dbReference type="FunFam" id="2.60.40.10:FF:000032">
    <property type="entry name" value="palladin isoform X1"/>
    <property type="match status" value="1"/>
</dbReference>
<dbReference type="Gene3D" id="2.60.40.10">
    <property type="entry name" value="Immunoglobulins"/>
    <property type="match status" value="8"/>
</dbReference>
<dbReference type="InterPro" id="IPR003961">
    <property type="entry name" value="FN3_dom"/>
</dbReference>
<dbReference type="InterPro" id="IPR036116">
    <property type="entry name" value="FN3_sf"/>
</dbReference>
<dbReference type="InterPro" id="IPR007110">
    <property type="entry name" value="Ig-like_dom"/>
</dbReference>
<dbReference type="InterPro" id="IPR036179">
    <property type="entry name" value="Ig-like_dom_sf"/>
</dbReference>
<dbReference type="InterPro" id="IPR013783">
    <property type="entry name" value="Ig-like_fold"/>
</dbReference>
<dbReference type="InterPro" id="IPR013098">
    <property type="entry name" value="Ig_I-set"/>
</dbReference>
<dbReference type="InterPro" id="IPR003599">
    <property type="entry name" value="Ig_sub"/>
</dbReference>
<dbReference type="InterPro" id="IPR003598">
    <property type="entry name" value="Ig_sub2"/>
</dbReference>
<dbReference type="PANTHER" id="PTHR44170:SF1">
    <property type="entry name" value="CELL ADHESION MOLECULE-RELATED_DOWN-REGULATED BY ONCOGENES"/>
    <property type="match status" value="1"/>
</dbReference>
<dbReference type="PANTHER" id="PTHR44170">
    <property type="entry name" value="PROTEIN SIDEKICK"/>
    <property type="match status" value="1"/>
</dbReference>
<dbReference type="Pfam" id="PF00041">
    <property type="entry name" value="fn3"/>
    <property type="match status" value="3"/>
</dbReference>
<dbReference type="Pfam" id="PF07679">
    <property type="entry name" value="I-set"/>
    <property type="match status" value="1"/>
</dbReference>
<dbReference type="Pfam" id="PF13927">
    <property type="entry name" value="Ig_3"/>
    <property type="match status" value="4"/>
</dbReference>
<dbReference type="PRINTS" id="PR00014">
    <property type="entry name" value="FNTYPEIII"/>
</dbReference>
<dbReference type="SMART" id="SM00060">
    <property type="entry name" value="FN3"/>
    <property type="match status" value="3"/>
</dbReference>
<dbReference type="SMART" id="SM00409">
    <property type="entry name" value="IG"/>
    <property type="match status" value="5"/>
</dbReference>
<dbReference type="SMART" id="SM00408">
    <property type="entry name" value="IGc2"/>
    <property type="match status" value="5"/>
</dbReference>
<dbReference type="SUPFAM" id="SSF49265">
    <property type="entry name" value="Fibronectin type III"/>
    <property type="match status" value="2"/>
</dbReference>
<dbReference type="SUPFAM" id="SSF48726">
    <property type="entry name" value="Immunoglobulin"/>
    <property type="match status" value="5"/>
</dbReference>
<dbReference type="PROSITE" id="PS50853">
    <property type="entry name" value="FN3"/>
    <property type="match status" value="3"/>
</dbReference>
<dbReference type="PROSITE" id="PS50835">
    <property type="entry name" value="IG_LIKE"/>
    <property type="match status" value="5"/>
</dbReference>
<protein>
    <recommendedName>
        <fullName>Cell adhesion molecule-related/down-regulated by oncogenes</fullName>
    </recommendedName>
</protein>
<reference key="1">
    <citation type="journal article" date="2002" name="EMBO J.">
        <title>BOC, an Ig superfamily member, associates with CDO to positively regulate myogenic differentiation.</title>
        <authorList>
            <person name="Kang J.-S."/>
            <person name="Mulieri P.J."/>
            <person name="Hu Y."/>
            <person name="Taliana L."/>
            <person name="Krauss R.S."/>
        </authorList>
    </citation>
    <scope>NUCLEOTIDE SEQUENCE [MRNA]</scope>
</reference>
<keyword id="KW-0130">Cell adhesion</keyword>
<keyword id="KW-1003">Cell membrane</keyword>
<keyword id="KW-1015">Disulfide bond</keyword>
<keyword id="KW-0325">Glycoprotein</keyword>
<keyword id="KW-0393">Immunoglobulin domain</keyword>
<keyword id="KW-0472">Membrane</keyword>
<keyword id="KW-1185">Reference proteome</keyword>
<keyword id="KW-0677">Repeat</keyword>
<keyword id="KW-0732">Signal</keyword>
<keyword id="KW-0812">Transmembrane</keyword>
<keyword id="KW-1133">Transmembrane helix</keyword>
<sequence>MHSDPGPWHPLLCFLVLALSTSANSDVTPRFTSKPLSTVQKPGGPVTLLCSAEPPWAHISWLFNGEQFERISSQGVDIQSGHLVIPSLGPAHVGQYQCIASTSVGAILSKSVSVSVAYLNDFETTTGHSVTAEEGSSAFIGCKIPESNPKAHVRYKVRGKWLKESSDKYLILPSGNLHILNVSVEDRGTYRCAAYNPVTHDLKLSTSTLKLSVNRSPRVDSRILHPVTSQAVLVQIHDPLTLECVVGGGPSHPPVYWYKGGQEAAAYGRRKLLHTHLVIEQVQRSDAGNYSCVLGNGSGISQRVYYTVIVLEPPSVSQKTEDQSLTAGSNVRFSCESRGNPTPNITWFHNAVQIHASTRHQISGNKIRITSLFAQDSGIYQCFVNNEAGSAQVSQRATVHLKWSKPVIVSPPTSIRVANGDLVTLTCNATGIPTPTIRWYDSHGPISSHPSQVLRSKSRKALLSKIGTPGQDPVHYTMSQAGSSSLYIRAITVQHAGTYKCEATNEFGSAHADAYLTVVPYEMSTKPEDITPLDLTQSDEGDYDSETRVPDHSQINEHKPEPRVTEKPYSGASLPEAPIILSPPQTTKPDMYNLMWRSGKDGGLPINAYFVRYRKLDDDGNMVGNWNSIRVPASENEFPLTELEPSSLYEVLMVARNAAGEGQPAMLTFRTSKERTSSSKNTQAPFPPIGVPKQTIIHGVSNTNNGLVPVDPSRHSGVPEAPDRPTISTASETSVYVTWIPRANGGSPITSFKVEYKRTGGHWNAAAENIPPSKLSVEVSNLEPGGLYKFRVIAINNYGESRRSTVSRPYQVAGYSIRLPNPLIVGPRIDQTEAVTDTQILLKWTYIPENNNNTPIQGFYIYYRPTDSDNDSDYKRDMVEGTKLRHLISHLQPETSYDIKMQCFNERGASDYSNVMMCETKARRSPGASEYPVLDLSTPSVPDRSSSPSHSPTRNGDFLYVIVGCVLGGMVLILLAFIAMCLLKNRQQTLMQKFEPPGYLYQGADLNGQIIEYTTLPGTSRINGSVHTGFMGNGNINNGCPHLHHKVHNRASEVGNGELYPGCNSSLKETYVDYDRLPHHLSNGRVMYTALPQADPTECINCRNCCNNNRCFTKPNGSYCGNGVAVMPVGFSPQQEEGETKPLNHVMVPMCLTSPDQNCSEEIEEDQNEKETQLSANSVCPEEATQTGTEQHEGEDCTKTEDDSSILTWTPLILPAISKDCDEKHVWTSTDITLDKSNVDHPQLQTQEA</sequence>
<comment type="function">
    <text evidence="1">Component of a cell-surface receptor complex that mediates cell-cell interactions between muscle precursor cells. Promotes differentiation of myogenic cells (By similarity).</text>
</comment>
<comment type="subcellular location">
    <subcellularLocation>
        <location evidence="1">Cell membrane</location>
        <topology evidence="1">Single-pass membrane protein</topology>
    </subcellularLocation>
</comment>
<proteinExistence type="evidence at transcript level"/>
<name>CDON_XENLA</name>
<organism>
    <name type="scientific">Xenopus laevis</name>
    <name type="common">African clawed frog</name>
    <dbReference type="NCBI Taxonomy" id="8355"/>
    <lineage>
        <taxon>Eukaryota</taxon>
        <taxon>Metazoa</taxon>
        <taxon>Chordata</taxon>
        <taxon>Craniata</taxon>
        <taxon>Vertebrata</taxon>
        <taxon>Euteleostomi</taxon>
        <taxon>Amphibia</taxon>
        <taxon>Batrachia</taxon>
        <taxon>Anura</taxon>
        <taxon>Pipoidea</taxon>
        <taxon>Pipidae</taxon>
        <taxon>Xenopodinae</taxon>
        <taxon>Xenopus</taxon>
        <taxon>Xenopus</taxon>
    </lineage>
</organism>
<evidence type="ECO:0000250" key="1"/>
<evidence type="ECO:0000255" key="2"/>
<evidence type="ECO:0000255" key="3">
    <source>
        <dbReference type="PROSITE-ProRule" id="PRU00114"/>
    </source>
</evidence>
<evidence type="ECO:0000255" key="4">
    <source>
        <dbReference type="PROSITE-ProRule" id="PRU00316"/>
    </source>
</evidence>
<evidence type="ECO:0000256" key="5">
    <source>
        <dbReference type="SAM" id="MobiDB-lite"/>
    </source>
</evidence>
<feature type="signal peptide" evidence="2">
    <location>
        <begin position="1"/>
        <end position="25"/>
    </location>
</feature>
<feature type="chain" id="PRO_0000234057" description="Cell adhesion molecule-related/down-regulated by oncogenes">
    <location>
        <begin position="26"/>
        <end position="1249"/>
    </location>
</feature>
<feature type="topological domain" description="Extracellular" evidence="2">
    <location>
        <begin position="26"/>
        <end position="957"/>
    </location>
</feature>
<feature type="transmembrane region" description="Helical" evidence="2">
    <location>
        <begin position="958"/>
        <end position="978"/>
    </location>
</feature>
<feature type="topological domain" description="Cytoplasmic" evidence="2">
    <location>
        <begin position="979"/>
        <end position="1249"/>
    </location>
</feature>
<feature type="domain" description="Ig-like C2-type 1">
    <location>
        <begin position="29"/>
        <end position="113"/>
    </location>
</feature>
<feature type="domain" description="Ig-like C2-type 2">
    <location>
        <begin position="120"/>
        <end position="212"/>
    </location>
</feature>
<feature type="domain" description="Ig-like C2-type 3">
    <location>
        <begin position="217"/>
        <end position="307"/>
    </location>
</feature>
<feature type="domain" description="Ig-like C2-type 4">
    <location>
        <begin position="314"/>
        <end position="400"/>
    </location>
</feature>
<feature type="domain" description="Ig-like C2-type 5">
    <location>
        <begin position="406"/>
        <end position="517"/>
    </location>
</feature>
<feature type="domain" description="Fibronectin type-III 1" evidence="4">
    <location>
        <begin position="577"/>
        <end position="675"/>
    </location>
</feature>
<feature type="domain" description="Fibronectin type-III 2" evidence="4">
    <location>
        <begin position="721"/>
        <end position="815"/>
    </location>
</feature>
<feature type="domain" description="Fibronectin type-III 3" evidence="4">
    <location>
        <begin position="826"/>
        <end position="923"/>
    </location>
</feature>
<feature type="region of interest" description="Disordered" evidence="5">
    <location>
        <begin position="528"/>
        <end position="585"/>
    </location>
</feature>
<feature type="region of interest" description="Disordered" evidence="5">
    <location>
        <begin position="671"/>
        <end position="690"/>
    </location>
</feature>
<feature type="region of interest" description="Disordered" evidence="5">
    <location>
        <begin position="929"/>
        <end position="952"/>
    </location>
</feature>
<feature type="region of interest" description="Disordered" evidence="5">
    <location>
        <begin position="1158"/>
        <end position="1202"/>
    </location>
</feature>
<feature type="compositionally biased region" description="Basic and acidic residues" evidence="5">
    <location>
        <begin position="545"/>
        <end position="566"/>
    </location>
</feature>
<feature type="compositionally biased region" description="Low complexity" evidence="5">
    <location>
        <begin position="937"/>
        <end position="952"/>
    </location>
</feature>
<feature type="compositionally biased region" description="Acidic residues" evidence="5">
    <location>
        <begin position="1159"/>
        <end position="1168"/>
    </location>
</feature>
<feature type="compositionally biased region" description="Polar residues" evidence="5">
    <location>
        <begin position="1173"/>
        <end position="1189"/>
    </location>
</feature>
<feature type="compositionally biased region" description="Basic and acidic residues" evidence="5">
    <location>
        <begin position="1190"/>
        <end position="1202"/>
    </location>
</feature>
<feature type="glycosylation site" description="N-linked (GlcNAc...) asparagine" evidence="2">
    <location>
        <position position="181"/>
    </location>
</feature>
<feature type="glycosylation site" description="N-linked (GlcNAc...) asparagine" evidence="2">
    <location>
        <position position="289"/>
    </location>
</feature>
<feature type="glycosylation site" description="N-linked (GlcNAc...) asparagine" evidence="2">
    <location>
        <position position="296"/>
    </location>
</feature>
<feature type="glycosylation site" description="N-linked (GlcNAc...) asparagine" evidence="2">
    <location>
        <position position="344"/>
    </location>
</feature>
<feature type="glycosylation site" description="N-linked (GlcNAc...) asparagine" evidence="2">
    <location>
        <position position="428"/>
    </location>
</feature>
<feature type="glycosylation site" description="N-linked (GlcNAc...) asparagine" evidence="2">
    <location>
        <position position="870"/>
    </location>
</feature>
<feature type="disulfide bond" evidence="3">
    <location>
        <begin position="50"/>
        <end position="98"/>
    </location>
</feature>
<feature type="disulfide bond" evidence="3">
    <location>
        <begin position="142"/>
        <end position="192"/>
    </location>
</feature>
<feature type="disulfide bond" evidence="3">
    <location>
        <begin position="244"/>
        <end position="292"/>
    </location>
</feature>
<feature type="disulfide bond" evidence="3">
    <location>
        <begin position="335"/>
        <end position="382"/>
    </location>
</feature>
<feature type="disulfide bond" evidence="3">
    <location>
        <begin position="427"/>
        <end position="501"/>
    </location>
</feature>
<accession>Q90Z04</accession>
<gene>
    <name type="primary">cdon</name>
    <name type="synonym">cdo</name>
</gene>